<comment type="catalytic activity">
    <reaction evidence="1">
        <text>tRNA(Leu) + L-leucine + ATP = L-leucyl-tRNA(Leu) + AMP + diphosphate</text>
        <dbReference type="Rhea" id="RHEA:11688"/>
        <dbReference type="Rhea" id="RHEA-COMP:9613"/>
        <dbReference type="Rhea" id="RHEA-COMP:9622"/>
        <dbReference type="ChEBI" id="CHEBI:30616"/>
        <dbReference type="ChEBI" id="CHEBI:33019"/>
        <dbReference type="ChEBI" id="CHEBI:57427"/>
        <dbReference type="ChEBI" id="CHEBI:78442"/>
        <dbReference type="ChEBI" id="CHEBI:78494"/>
        <dbReference type="ChEBI" id="CHEBI:456215"/>
        <dbReference type="EC" id="6.1.1.4"/>
    </reaction>
</comment>
<comment type="subcellular location">
    <subcellularLocation>
        <location evidence="1">Cytoplasm</location>
    </subcellularLocation>
</comment>
<comment type="similarity">
    <text evidence="1">Belongs to the class-I aminoacyl-tRNA synthetase family.</text>
</comment>
<comment type="sequence caution" evidence="2">
    <conflict type="erroneous initiation">
        <sequence resource="EMBL-CDS" id="ABN62749"/>
    </conflict>
</comment>
<gene>
    <name evidence="1" type="primary">leuS</name>
    <name type="ordered locus">Sbal_3269</name>
</gene>
<protein>
    <recommendedName>
        <fullName evidence="1">Leucine--tRNA ligase</fullName>
        <ecNumber evidence="1">6.1.1.4</ecNumber>
    </recommendedName>
    <alternativeName>
        <fullName evidence="1">Leucyl-tRNA synthetase</fullName>
        <shortName evidence="1">LeuRS</shortName>
    </alternativeName>
</protein>
<sequence length="859" mass="96606">MQEQYNPSEIEALVQKHWHDNKTFEVTEDANKEKFYCLSMFPYPSGRLHMGHVRNYTIGDVVARFQRLQGKNVLQPIGWDSFGLPAENAAINNKTAPAPWTYENIEYMKNQLKLLGFGYDWSREIATCTPEYYRWEQWFFTKLYEKGLVYKKTASVNWCPNDETVLANEQVQDGCCWRCDTPVEQKEIPQWFIKITAYAEELLNDIDTLDGWPDQVKTMQRNWIGRSEGVEMTFGVAGHDKSFDIYTTRPDTLMGVTYVAIAAGHPLAEIAAHTNPELAAFIDECKNSTTSEAELATMEKRGVATGLFAIHPITGKQVPIWAANFVLMNYGTGAVMSVPGHDQRDFEFAKKYGLAIEAVIKPVDGDVDISEAAYTEKGVLFNSGEFDGLDFEAGFNAIANKLVAEGKGKRQVNYRLRDWGVSRQRYWGAPIPMVTLADGTVIPTPADQLPVLLPEDVVMDGIQSPIKADKEWAKTQVNGQDALRETDTFDTFMESSWYYARYCSPHADEMLDPAKANYWLPVDQYIGGIEHACMHLLYFRFFHKLLRDAGLVNSNEPAKQLLTQGMVLADAFYYINEKGARVWVSPLDVATTEKDDKGRITKAIDKDGNELVYTGMSKMSKSKNNGIDPQVMVEKYGADTVRLFMMFASPPELTLEWQESGVEGAHRFIKRLWKLANEHVNQDNSEALDVSTLTSDQKALRREVHKTIAKVTDDIGRRQMFNTAVAAVMELMNHLQKAPQTTGQDNAIIGEALSAIVRLLYPIIPHVSFNLWNELGNASNIEDSQWPVVDEAALVEDSKLIVVQVNGKVRAKITVAADADKESVEALGMSDEHVIKYLDGLTVRKVIYVPGKLLSIVAN</sequence>
<accession>A3D7N6</accession>
<proteinExistence type="inferred from homology"/>
<evidence type="ECO:0000255" key="1">
    <source>
        <dbReference type="HAMAP-Rule" id="MF_00049"/>
    </source>
</evidence>
<evidence type="ECO:0000305" key="2"/>
<reference key="1">
    <citation type="submission" date="2007-02" db="EMBL/GenBank/DDBJ databases">
        <title>Complete sequence of chromosome of Shewanella baltica OS155.</title>
        <authorList>
            <consortium name="US DOE Joint Genome Institute"/>
            <person name="Copeland A."/>
            <person name="Lucas S."/>
            <person name="Lapidus A."/>
            <person name="Barry K."/>
            <person name="Detter J.C."/>
            <person name="Glavina del Rio T."/>
            <person name="Hammon N."/>
            <person name="Israni S."/>
            <person name="Dalin E."/>
            <person name="Tice H."/>
            <person name="Pitluck S."/>
            <person name="Sims D.R."/>
            <person name="Brettin T."/>
            <person name="Bruce D."/>
            <person name="Han C."/>
            <person name="Tapia R."/>
            <person name="Brainard J."/>
            <person name="Schmutz J."/>
            <person name="Larimer F."/>
            <person name="Land M."/>
            <person name="Hauser L."/>
            <person name="Kyrpides N."/>
            <person name="Mikhailova N."/>
            <person name="Brettar I."/>
            <person name="Klappenbach J."/>
            <person name="Konstantinidis K."/>
            <person name="Rodrigues J."/>
            <person name="Tiedje J."/>
            <person name="Richardson P."/>
        </authorList>
    </citation>
    <scope>NUCLEOTIDE SEQUENCE [LARGE SCALE GENOMIC DNA]</scope>
    <source>
        <strain>OS155 / ATCC BAA-1091</strain>
    </source>
</reference>
<dbReference type="EC" id="6.1.1.4" evidence="1"/>
<dbReference type="EMBL" id="CP000563">
    <property type="protein sequence ID" value="ABN62749.1"/>
    <property type="status" value="ALT_INIT"/>
    <property type="molecule type" value="Genomic_DNA"/>
</dbReference>
<dbReference type="RefSeq" id="WP_006082747.1">
    <property type="nucleotide sequence ID" value="NC_009052.1"/>
</dbReference>
<dbReference type="SMR" id="A3D7N6"/>
<dbReference type="STRING" id="325240.Sbal_3269"/>
<dbReference type="KEGG" id="sbl:Sbal_3269"/>
<dbReference type="HOGENOM" id="CLU_004427_0_0_6"/>
<dbReference type="OrthoDB" id="9810365at2"/>
<dbReference type="Proteomes" id="UP000001557">
    <property type="component" value="Chromosome"/>
</dbReference>
<dbReference type="GO" id="GO:0005829">
    <property type="term" value="C:cytosol"/>
    <property type="evidence" value="ECO:0007669"/>
    <property type="project" value="TreeGrafter"/>
</dbReference>
<dbReference type="GO" id="GO:0002161">
    <property type="term" value="F:aminoacyl-tRNA deacylase activity"/>
    <property type="evidence" value="ECO:0007669"/>
    <property type="project" value="InterPro"/>
</dbReference>
<dbReference type="GO" id="GO:0005524">
    <property type="term" value="F:ATP binding"/>
    <property type="evidence" value="ECO:0007669"/>
    <property type="project" value="UniProtKB-UniRule"/>
</dbReference>
<dbReference type="GO" id="GO:0004823">
    <property type="term" value="F:leucine-tRNA ligase activity"/>
    <property type="evidence" value="ECO:0007669"/>
    <property type="project" value="UniProtKB-UniRule"/>
</dbReference>
<dbReference type="GO" id="GO:0006429">
    <property type="term" value="P:leucyl-tRNA aminoacylation"/>
    <property type="evidence" value="ECO:0007669"/>
    <property type="project" value="UniProtKB-UniRule"/>
</dbReference>
<dbReference type="CDD" id="cd07958">
    <property type="entry name" value="Anticodon_Ia_Leu_BEm"/>
    <property type="match status" value="1"/>
</dbReference>
<dbReference type="CDD" id="cd00812">
    <property type="entry name" value="LeuRS_core"/>
    <property type="match status" value="1"/>
</dbReference>
<dbReference type="FunFam" id="1.10.730.10:FF:000003">
    <property type="entry name" value="Leucine--tRNA ligase"/>
    <property type="match status" value="1"/>
</dbReference>
<dbReference type="FunFam" id="2.20.28.290:FF:000001">
    <property type="entry name" value="Leucine--tRNA ligase"/>
    <property type="match status" value="1"/>
</dbReference>
<dbReference type="FunFam" id="3.10.20.590:FF:000001">
    <property type="entry name" value="Leucine--tRNA ligase"/>
    <property type="match status" value="1"/>
</dbReference>
<dbReference type="FunFam" id="3.40.50.620:FF:000003">
    <property type="entry name" value="Leucine--tRNA ligase"/>
    <property type="match status" value="1"/>
</dbReference>
<dbReference type="FunFam" id="3.40.50.620:FF:000124">
    <property type="entry name" value="Leucine--tRNA ligase"/>
    <property type="match status" value="1"/>
</dbReference>
<dbReference type="FunFam" id="3.90.740.10:FF:000012">
    <property type="entry name" value="Leucine--tRNA ligase"/>
    <property type="match status" value="1"/>
</dbReference>
<dbReference type="Gene3D" id="2.20.28.290">
    <property type="match status" value="1"/>
</dbReference>
<dbReference type="Gene3D" id="3.10.20.590">
    <property type="match status" value="1"/>
</dbReference>
<dbReference type="Gene3D" id="3.40.50.620">
    <property type="entry name" value="HUPs"/>
    <property type="match status" value="2"/>
</dbReference>
<dbReference type="Gene3D" id="1.10.730.10">
    <property type="entry name" value="Isoleucyl-tRNA Synthetase, Domain 1"/>
    <property type="match status" value="1"/>
</dbReference>
<dbReference type="HAMAP" id="MF_00049_B">
    <property type="entry name" value="Leu_tRNA_synth_B"/>
    <property type="match status" value="1"/>
</dbReference>
<dbReference type="InterPro" id="IPR001412">
    <property type="entry name" value="aa-tRNA-synth_I_CS"/>
</dbReference>
<dbReference type="InterPro" id="IPR002300">
    <property type="entry name" value="aa-tRNA-synth_Ia"/>
</dbReference>
<dbReference type="InterPro" id="IPR002302">
    <property type="entry name" value="Leu-tRNA-ligase"/>
</dbReference>
<dbReference type="InterPro" id="IPR025709">
    <property type="entry name" value="Leu_tRNA-synth_edit"/>
</dbReference>
<dbReference type="InterPro" id="IPR013155">
    <property type="entry name" value="M/V/L/I-tRNA-synth_anticd-bd"/>
</dbReference>
<dbReference type="InterPro" id="IPR015413">
    <property type="entry name" value="Methionyl/Leucyl_tRNA_Synth"/>
</dbReference>
<dbReference type="InterPro" id="IPR014729">
    <property type="entry name" value="Rossmann-like_a/b/a_fold"/>
</dbReference>
<dbReference type="InterPro" id="IPR009080">
    <property type="entry name" value="tRNAsynth_Ia_anticodon-bd"/>
</dbReference>
<dbReference type="InterPro" id="IPR009008">
    <property type="entry name" value="Val/Leu/Ile-tRNA-synth_edit"/>
</dbReference>
<dbReference type="NCBIfam" id="TIGR00396">
    <property type="entry name" value="leuS_bact"/>
    <property type="match status" value="1"/>
</dbReference>
<dbReference type="PANTHER" id="PTHR43740:SF2">
    <property type="entry name" value="LEUCINE--TRNA LIGASE, MITOCHONDRIAL"/>
    <property type="match status" value="1"/>
</dbReference>
<dbReference type="PANTHER" id="PTHR43740">
    <property type="entry name" value="LEUCYL-TRNA SYNTHETASE"/>
    <property type="match status" value="1"/>
</dbReference>
<dbReference type="Pfam" id="PF08264">
    <property type="entry name" value="Anticodon_1"/>
    <property type="match status" value="1"/>
</dbReference>
<dbReference type="Pfam" id="PF00133">
    <property type="entry name" value="tRNA-synt_1"/>
    <property type="match status" value="2"/>
</dbReference>
<dbReference type="Pfam" id="PF13603">
    <property type="entry name" value="tRNA-synt_1_2"/>
    <property type="match status" value="1"/>
</dbReference>
<dbReference type="Pfam" id="PF09334">
    <property type="entry name" value="tRNA-synt_1g"/>
    <property type="match status" value="1"/>
</dbReference>
<dbReference type="PRINTS" id="PR00985">
    <property type="entry name" value="TRNASYNTHLEU"/>
</dbReference>
<dbReference type="SUPFAM" id="SSF47323">
    <property type="entry name" value="Anticodon-binding domain of a subclass of class I aminoacyl-tRNA synthetases"/>
    <property type="match status" value="1"/>
</dbReference>
<dbReference type="SUPFAM" id="SSF52374">
    <property type="entry name" value="Nucleotidylyl transferase"/>
    <property type="match status" value="1"/>
</dbReference>
<dbReference type="SUPFAM" id="SSF50677">
    <property type="entry name" value="ValRS/IleRS/LeuRS editing domain"/>
    <property type="match status" value="1"/>
</dbReference>
<dbReference type="PROSITE" id="PS00178">
    <property type="entry name" value="AA_TRNA_LIGASE_I"/>
    <property type="match status" value="1"/>
</dbReference>
<keyword id="KW-0030">Aminoacyl-tRNA synthetase</keyword>
<keyword id="KW-0067">ATP-binding</keyword>
<keyword id="KW-0963">Cytoplasm</keyword>
<keyword id="KW-0436">Ligase</keyword>
<keyword id="KW-0547">Nucleotide-binding</keyword>
<keyword id="KW-0648">Protein biosynthesis</keyword>
<keyword id="KW-1185">Reference proteome</keyword>
<name>SYL_SHEB5</name>
<organism>
    <name type="scientific">Shewanella baltica (strain OS155 / ATCC BAA-1091)</name>
    <dbReference type="NCBI Taxonomy" id="325240"/>
    <lineage>
        <taxon>Bacteria</taxon>
        <taxon>Pseudomonadati</taxon>
        <taxon>Pseudomonadota</taxon>
        <taxon>Gammaproteobacteria</taxon>
        <taxon>Alteromonadales</taxon>
        <taxon>Shewanellaceae</taxon>
        <taxon>Shewanella</taxon>
    </lineage>
</organism>
<feature type="chain" id="PRO_0000334813" description="Leucine--tRNA ligase">
    <location>
        <begin position="1"/>
        <end position="859"/>
    </location>
</feature>
<feature type="short sequence motif" description="'HIGH' region">
    <location>
        <begin position="42"/>
        <end position="52"/>
    </location>
</feature>
<feature type="short sequence motif" description="'KMSKS' region">
    <location>
        <begin position="618"/>
        <end position="622"/>
    </location>
</feature>
<feature type="binding site" evidence="1">
    <location>
        <position position="621"/>
    </location>
    <ligand>
        <name>ATP</name>
        <dbReference type="ChEBI" id="CHEBI:30616"/>
    </ligand>
</feature>